<protein>
    <recommendedName>
        <fullName evidence="1">Triosephosphate isomerase</fullName>
        <shortName evidence="1">TIM</shortName>
        <shortName evidence="1">TPI</shortName>
        <ecNumber evidence="1">5.3.1.1</ecNumber>
    </recommendedName>
    <alternativeName>
        <fullName evidence="1">Triose-phosphate isomerase</fullName>
    </alternativeName>
</protein>
<dbReference type="EC" id="5.3.1.1" evidence="1"/>
<dbReference type="EMBL" id="CP000153">
    <property type="protein sequence ID" value="ABB45026.1"/>
    <property type="molecule type" value="Genomic_DNA"/>
</dbReference>
<dbReference type="RefSeq" id="WP_011373367.1">
    <property type="nucleotide sequence ID" value="NC_007575.1"/>
</dbReference>
<dbReference type="SMR" id="Q30PQ5"/>
<dbReference type="STRING" id="326298.Suden_1752"/>
<dbReference type="KEGG" id="tdn:Suden_1752"/>
<dbReference type="eggNOG" id="COG0149">
    <property type="taxonomic scope" value="Bacteria"/>
</dbReference>
<dbReference type="HOGENOM" id="CLU_024251_2_3_7"/>
<dbReference type="OrthoDB" id="9809429at2"/>
<dbReference type="UniPathway" id="UPA00109">
    <property type="reaction ID" value="UER00189"/>
</dbReference>
<dbReference type="UniPathway" id="UPA00138"/>
<dbReference type="Proteomes" id="UP000002714">
    <property type="component" value="Chromosome"/>
</dbReference>
<dbReference type="GO" id="GO:0005829">
    <property type="term" value="C:cytosol"/>
    <property type="evidence" value="ECO:0007669"/>
    <property type="project" value="TreeGrafter"/>
</dbReference>
<dbReference type="GO" id="GO:0004807">
    <property type="term" value="F:triose-phosphate isomerase activity"/>
    <property type="evidence" value="ECO:0007669"/>
    <property type="project" value="UniProtKB-EC"/>
</dbReference>
<dbReference type="GO" id="GO:0006094">
    <property type="term" value="P:gluconeogenesis"/>
    <property type="evidence" value="ECO:0007669"/>
    <property type="project" value="UniProtKB-UniPathway"/>
</dbReference>
<dbReference type="GO" id="GO:0046166">
    <property type="term" value="P:glyceraldehyde-3-phosphate biosynthetic process"/>
    <property type="evidence" value="ECO:0007669"/>
    <property type="project" value="TreeGrafter"/>
</dbReference>
<dbReference type="GO" id="GO:0019563">
    <property type="term" value="P:glycerol catabolic process"/>
    <property type="evidence" value="ECO:0007669"/>
    <property type="project" value="TreeGrafter"/>
</dbReference>
<dbReference type="GO" id="GO:0006096">
    <property type="term" value="P:glycolytic process"/>
    <property type="evidence" value="ECO:0007669"/>
    <property type="project" value="UniProtKB-UniPathway"/>
</dbReference>
<dbReference type="CDD" id="cd00311">
    <property type="entry name" value="TIM"/>
    <property type="match status" value="1"/>
</dbReference>
<dbReference type="Gene3D" id="3.20.20.70">
    <property type="entry name" value="Aldolase class I"/>
    <property type="match status" value="1"/>
</dbReference>
<dbReference type="InterPro" id="IPR013785">
    <property type="entry name" value="Aldolase_TIM"/>
</dbReference>
<dbReference type="InterPro" id="IPR035990">
    <property type="entry name" value="TIM_sf"/>
</dbReference>
<dbReference type="InterPro" id="IPR000652">
    <property type="entry name" value="Triosephosphate_isomerase"/>
</dbReference>
<dbReference type="InterPro" id="IPR020861">
    <property type="entry name" value="Triosephosphate_isomerase_AS"/>
</dbReference>
<dbReference type="NCBIfam" id="NF000728">
    <property type="entry name" value="PRK00042.3-2"/>
    <property type="match status" value="1"/>
</dbReference>
<dbReference type="PANTHER" id="PTHR21139">
    <property type="entry name" value="TRIOSEPHOSPHATE ISOMERASE"/>
    <property type="match status" value="1"/>
</dbReference>
<dbReference type="PANTHER" id="PTHR21139:SF42">
    <property type="entry name" value="TRIOSEPHOSPHATE ISOMERASE"/>
    <property type="match status" value="1"/>
</dbReference>
<dbReference type="Pfam" id="PF00121">
    <property type="entry name" value="TIM"/>
    <property type="match status" value="1"/>
</dbReference>
<dbReference type="SUPFAM" id="SSF51351">
    <property type="entry name" value="Triosephosphate isomerase (TIM)"/>
    <property type="match status" value="1"/>
</dbReference>
<dbReference type="PROSITE" id="PS00171">
    <property type="entry name" value="TIM_1"/>
    <property type="match status" value="1"/>
</dbReference>
<dbReference type="PROSITE" id="PS51440">
    <property type="entry name" value="TIM_2"/>
    <property type="match status" value="1"/>
</dbReference>
<organism>
    <name type="scientific">Sulfurimonas denitrificans (strain ATCC 33889 / DSM 1251)</name>
    <name type="common">Thiomicrospira denitrificans (strain ATCC 33889 / DSM 1251)</name>
    <dbReference type="NCBI Taxonomy" id="326298"/>
    <lineage>
        <taxon>Bacteria</taxon>
        <taxon>Pseudomonadati</taxon>
        <taxon>Campylobacterota</taxon>
        <taxon>Epsilonproteobacteria</taxon>
        <taxon>Campylobacterales</taxon>
        <taxon>Sulfurimonadaceae</taxon>
        <taxon>Sulfurimonas</taxon>
    </lineage>
</organism>
<evidence type="ECO:0000250" key="1">
    <source>
        <dbReference type="UniProtKB" id="P9WG43"/>
    </source>
</evidence>
<evidence type="ECO:0000305" key="2"/>
<accession>Q30PQ5</accession>
<keyword id="KW-0963">Cytoplasm</keyword>
<keyword id="KW-0312">Gluconeogenesis</keyword>
<keyword id="KW-0324">Glycolysis</keyword>
<keyword id="KW-0413">Isomerase</keyword>
<keyword id="KW-1185">Reference proteome</keyword>
<gene>
    <name evidence="1" type="primary">tpiA</name>
    <name type="ordered locus">Suden_1752</name>
</gene>
<sequence>MIIAANLKTNLTREKTAKYIKEVESFLNQHNISQEVFVFPAISNLISSSANVVVGAQNAYPTQNGAFTGEIGNEQLEEFGIKTILIGHSERRHVIGETQDSLIVKFNFYKNLGFKIIYCVGEPLHIREMGHEKMMEYISAQYVGIDAAYENLIIAYEPVWAIGTGLTPTLEDIKMIHKELKAKSTAPLLYGGSVKVTNVEEVLALDGVDGVLVGSAALYVEHFCTMCEYAQNIDKKNKKL</sequence>
<name>TPIS_SULDN</name>
<reference key="1">
    <citation type="journal article" date="2008" name="Appl. Environ. Microbiol.">
        <title>Genome of the epsilonproteobacterial chemolithoautotroph Sulfurimonas denitrificans.</title>
        <authorList>
            <person name="Sievert S.M."/>
            <person name="Scott K.M."/>
            <person name="Klotz M.G."/>
            <person name="Chain P.S.G."/>
            <person name="Hauser L.J."/>
            <person name="Hemp J."/>
            <person name="Huegler M."/>
            <person name="Land M."/>
            <person name="Lapidus A."/>
            <person name="Larimer F.W."/>
            <person name="Lucas S."/>
            <person name="Malfatti S.A."/>
            <person name="Meyer F."/>
            <person name="Paulsen I.T."/>
            <person name="Ren Q."/>
            <person name="Simon J."/>
            <person name="Bailey K."/>
            <person name="Diaz E."/>
            <person name="Fitzpatrick K.A."/>
            <person name="Glover B."/>
            <person name="Gwatney N."/>
            <person name="Korajkic A."/>
            <person name="Long A."/>
            <person name="Mobberley J.M."/>
            <person name="Pantry S.N."/>
            <person name="Pazder G."/>
            <person name="Peterson S."/>
            <person name="Quintanilla J.D."/>
            <person name="Sprinkle R."/>
            <person name="Stephens J."/>
            <person name="Thomas P."/>
            <person name="Vaughn R."/>
            <person name="Weber M.J."/>
            <person name="Wooten L.L."/>
        </authorList>
    </citation>
    <scope>NUCLEOTIDE SEQUENCE [LARGE SCALE GENOMIC DNA]</scope>
    <source>
        <strain>ATCC 33889 / DSM 1251</strain>
    </source>
</reference>
<comment type="function">
    <text evidence="1">Involved in the gluconeogenesis. Catalyzes stereospecifically the conversion of dihydroxyacetone phosphate (DHAP) to D-glyceraldehyde-3-phosphate (G3P).</text>
</comment>
<comment type="catalytic activity">
    <reaction evidence="1">
        <text>D-glyceraldehyde 3-phosphate = dihydroxyacetone phosphate</text>
        <dbReference type="Rhea" id="RHEA:18585"/>
        <dbReference type="ChEBI" id="CHEBI:57642"/>
        <dbReference type="ChEBI" id="CHEBI:59776"/>
        <dbReference type="EC" id="5.3.1.1"/>
    </reaction>
</comment>
<comment type="pathway">
    <text evidence="1">Carbohydrate biosynthesis; gluconeogenesis.</text>
</comment>
<comment type="pathway">
    <text evidence="1">Carbohydrate degradation; glycolysis; D-glyceraldehyde 3-phosphate from glycerone phosphate: step 1/1.</text>
</comment>
<comment type="subunit">
    <text evidence="1">Homodimer.</text>
</comment>
<comment type="subcellular location">
    <subcellularLocation>
        <location evidence="1">Cytoplasm</location>
    </subcellularLocation>
</comment>
<comment type="similarity">
    <text evidence="2">Belongs to the triosephosphate isomerase family.</text>
</comment>
<proteinExistence type="inferred from homology"/>
<feature type="chain" id="PRO_1000009860" description="Triosephosphate isomerase">
    <location>
        <begin position="1"/>
        <end position="240"/>
    </location>
</feature>
<feature type="active site" description="Electrophile" evidence="1">
    <location>
        <position position="88"/>
    </location>
</feature>
<feature type="active site" description="Proton acceptor" evidence="1">
    <location>
        <position position="157"/>
    </location>
</feature>
<feature type="binding site" evidence="1">
    <location>
        <begin position="6"/>
        <end position="8"/>
    </location>
    <ligand>
        <name>substrate</name>
    </ligand>
</feature>
<feature type="binding site" evidence="1">
    <location>
        <position position="163"/>
    </location>
    <ligand>
        <name>substrate</name>
    </ligand>
</feature>
<feature type="binding site" evidence="1">
    <location>
        <position position="193"/>
    </location>
    <ligand>
        <name>substrate</name>
    </ligand>
</feature>